<keyword id="KW-0963">Cytoplasm</keyword>
<keyword id="KW-1185">Reference proteome</keyword>
<keyword id="KW-0690">Ribosome biogenesis</keyword>
<accession>Q6MMS8</accession>
<name>RIMP_BDEBA</name>
<evidence type="ECO:0000255" key="1">
    <source>
        <dbReference type="HAMAP-Rule" id="MF_01077"/>
    </source>
</evidence>
<sequence length="174" mass="19552">MSESPSWMAKVEKIANDVAAAQGCVLYDIEFVGLGKGRTLRLFIDREEEGAISIEDCTNVSRGLSEILDADEEMIPGGEYNLEVSTPGLDRHLKKPWHFKKAIGKKVYIKTTKALESVGVEDKKWKNAKTVEEVLESADEQGVRFVVKDVEIKIPYAMIDRAKLVFEYTKGQKK</sequence>
<reference key="1">
    <citation type="journal article" date="2004" name="Science">
        <title>A predator unmasked: life cycle of Bdellovibrio bacteriovorus from a genomic perspective.</title>
        <authorList>
            <person name="Rendulic S."/>
            <person name="Jagtap P."/>
            <person name="Rosinus A."/>
            <person name="Eppinger M."/>
            <person name="Baar C."/>
            <person name="Lanz C."/>
            <person name="Keller H."/>
            <person name="Lambert C."/>
            <person name="Evans K.J."/>
            <person name="Goesmann A."/>
            <person name="Meyer F."/>
            <person name="Sockett R.E."/>
            <person name="Schuster S.C."/>
        </authorList>
    </citation>
    <scope>NUCLEOTIDE SEQUENCE [LARGE SCALE GENOMIC DNA]</scope>
    <source>
        <strain>ATCC 15356 / DSM 50701 / NCIMB 9529 / HD100</strain>
    </source>
</reference>
<gene>
    <name evidence="1" type="primary">rimP</name>
    <name type="ordered locus">Bd1545</name>
</gene>
<proteinExistence type="inferred from homology"/>
<organism>
    <name type="scientific">Bdellovibrio bacteriovorus (strain ATCC 15356 / DSM 50701 / NCIMB 9529 / HD100)</name>
    <dbReference type="NCBI Taxonomy" id="264462"/>
    <lineage>
        <taxon>Bacteria</taxon>
        <taxon>Pseudomonadati</taxon>
        <taxon>Bdellovibrionota</taxon>
        <taxon>Bdellovibrionia</taxon>
        <taxon>Bdellovibrionales</taxon>
        <taxon>Pseudobdellovibrionaceae</taxon>
        <taxon>Bdellovibrio</taxon>
    </lineage>
</organism>
<feature type="chain" id="PRO_0000181848" description="Ribosome maturation factor RimP">
    <location>
        <begin position="1"/>
        <end position="174"/>
    </location>
</feature>
<dbReference type="EMBL" id="BX842650">
    <property type="protein sequence ID" value="CAE79425.1"/>
    <property type="molecule type" value="Genomic_DNA"/>
</dbReference>
<dbReference type="SMR" id="Q6MMS8"/>
<dbReference type="STRING" id="264462.Bd1545"/>
<dbReference type="KEGG" id="bba:Bd1545"/>
<dbReference type="eggNOG" id="COG0779">
    <property type="taxonomic scope" value="Bacteria"/>
</dbReference>
<dbReference type="HOGENOM" id="CLU_070525_2_2_7"/>
<dbReference type="Proteomes" id="UP000008080">
    <property type="component" value="Chromosome"/>
</dbReference>
<dbReference type="GO" id="GO:0005829">
    <property type="term" value="C:cytosol"/>
    <property type="evidence" value="ECO:0007669"/>
    <property type="project" value="TreeGrafter"/>
</dbReference>
<dbReference type="GO" id="GO:0000028">
    <property type="term" value="P:ribosomal small subunit assembly"/>
    <property type="evidence" value="ECO:0007669"/>
    <property type="project" value="TreeGrafter"/>
</dbReference>
<dbReference type="GO" id="GO:0006412">
    <property type="term" value="P:translation"/>
    <property type="evidence" value="ECO:0007669"/>
    <property type="project" value="TreeGrafter"/>
</dbReference>
<dbReference type="CDD" id="cd01734">
    <property type="entry name" value="YlxS_C"/>
    <property type="match status" value="1"/>
</dbReference>
<dbReference type="Gene3D" id="2.30.30.180">
    <property type="entry name" value="Ribosome maturation factor RimP, C-terminal domain"/>
    <property type="match status" value="1"/>
</dbReference>
<dbReference type="Gene3D" id="3.30.300.70">
    <property type="entry name" value="RimP-like superfamily, N-terminal"/>
    <property type="match status" value="1"/>
</dbReference>
<dbReference type="HAMAP" id="MF_01077">
    <property type="entry name" value="RimP"/>
    <property type="match status" value="1"/>
</dbReference>
<dbReference type="InterPro" id="IPR003728">
    <property type="entry name" value="Ribosome_maturation_RimP"/>
</dbReference>
<dbReference type="InterPro" id="IPR028998">
    <property type="entry name" value="RimP_C"/>
</dbReference>
<dbReference type="InterPro" id="IPR036847">
    <property type="entry name" value="RimP_C_sf"/>
</dbReference>
<dbReference type="InterPro" id="IPR028989">
    <property type="entry name" value="RimP_N"/>
</dbReference>
<dbReference type="InterPro" id="IPR035956">
    <property type="entry name" value="RimP_N_sf"/>
</dbReference>
<dbReference type="PANTHER" id="PTHR33867">
    <property type="entry name" value="RIBOSOME MATURATION FACTOR RIMP"/>
    <property type="match status" value="1"/>
</dbReference>
<dbReference type="PANTHER" id="PTHR33867:SF1">
    <property type="entry name" value="RIBOSOME MATURATION FACTOR RIMP"/>
    <property type="match status" value="1"/>
</dbReference>
<dbReference type="Pfam" id="PF17384">
    <property type="entry name" value="DUF150_C"/>
    <property type="match status" value="1"/>
</dbReference>
<dbReference type="Pfam" id="PF02576">
    <property type="entry name" value="RimP_N"/>
    <property type="match status" value="1"/>
</dbReference>
<dbReference type="SUPFAM" id="SSF74942">
    <property type="entry name" value="YhbC-like, C-terminal domain"/>
    <property type="match status" value="1"/>
</dbReference>
<dbReference type="SUPFAM" id="SSF75420">
    <property type="entry name" value="YhbC-like, N-terminal domain"/>
    <property type="match status" value="1"/>
</dbReference>
<comment type="function">
    <text evidence="1">Required for maturation of 30S ribosomal subunits.</text>
</comment>
<comment type="subcellular location">
    <subcellularLocation>
        <location evidence="1">Cytoplasm</location>
    </subcellularLocation>
</comment>
<comment type="similarity">
    <text evidence="1">Belongs to the RimP family.</text>
</comment>
<protein>
    <recommendedName>
        <fullName evidence="1">Ribosome maturation factor RimP</fullName>
    </recommendedName>
</protein>